<protein>
    <recommendedName>
        <fullName evidence="1">Aliphatic sulfonates import ATP-binding protein SsuB 1</fullName>
        <ecNumber evidence="1">7.6.2.14</ecNumber>
    </recommendedName>
</protein>
<accession>Q02QT6</accession>
<proteinExistence type="inferred from homology"/>
<comment type="function">
    <text evidence="1">Part of the ABC transporter complex SsuABC involved in aliphatic sulfonates import. Responsible for energy coupling to the transport system.</text>
</comment>
<comment type="catalytic activity">
    <reaction evidence="1">
        <text>ATP + H2O + aliphatic sulfonate-[sulfonate-binding protein]Side 1 = ADP + phosphate + aliphatic sulfonateSide 2 + [sulfonate-binding protein]Side 1.</text>
        <dbReference type="EC" id="7.6.2.14"/>
    </reaction>
</comment>
<comment type="subunit">
    <text evidence="1">The complex is composed of two ATP-binding proteins (SsuB), two transmembrane proteins (SsuC) and a solute-binding protein (SsuA).</text>
</comment>
<comment type="subcellular location">
    <subcellularLocation>
        <location evidence="1">Cell inner membrane</location>
        <topology evidence="1">Peripheral membrane protein</topology>
    </subcellularLocation>
</comment>
<comment type="similarity">
    <text evidence="1">Belongs to the ABC transporter superfamily. Aliphatic sulfonates importer (TC 3.A.1.17.2) family.</text>
</comment>
<evidence type="ECO:0000255" key="1">
    <source>
        <dbReference type="HAMAP-Rule" id="MF_01724"/>
    </source>
</evidence>
<dbReference type="EC" id="7.6.2.14" evidence="1"/>
<dbReference type="EMBL" id="CP000438">
    <property type="protein sequence ID" value="ABJ12703.1"/>
    <property type="molecule type" value="Genomic_DNA"/>
</dbReference>
<dbReference type="RefSeq" id="WP_003091922.1">
    <property type="nucleotide sequence ID" value="NZ_CP034244.1"/>
</dbReference>
<dbReference type="SMR" id="Q02QT6"/>
<dbReference type="KEGG" id="pau:PA14_19520"/>
<dbReference type="PseudoCAP" id="PA14_19520"/>
<dbReference type="HOGENOM" id="CLU_000604_1_22_6"/>
<dbReference type="BioCyc" id="PAER208963:G1G74-1607-MONOMER"/>
<dbReference type="Proteomes" id="UP000000653">
    <property type="component" value="Chromosome"/>
</dbReference>
<dbReference type="GO" id="GO:0005886">
    <property type="term" value="C:plasma membrane"/>
    <property type="evidence" value="ECO:0007669"/>
    <property type="project" value="UniProtKB-SubCell"/>
</dbReference>
<dbReference type="GO" id="GO:0005524">
    <property type="term" value="F:ATP binding"/>
    <property type="evidence" value="ECO:0007669"/>
    <property type="project" value="UniProtKB-KW"/>
</dbReference>
<dbReference type="GO" id="GO:0016887">
    <property type="term" value="F:ATP hydrolysis activity"/>
    <property type="evidence" value="ECO:0007669"/>
    <property type="project" value="InterPro"/>
</dbReference>
<dbReference type="Gene3D" id="3.40.50.300">
    <property type="entry name" value="P-loop containing nucleotide triphosphate hydrolases"/>
    <property type="match status" value="1"/>
</dbReference>
<dbReference type="InterPro" id="IPR003593">
    <property type="entry name" value="AAA+_ATPase"/>
</dbReference>
<dbReference type="InterPro" id="IPR003439">
    <property type="entry name" value="ABC_transporter-like_ATP-bd"/>
</dbReference>
<dbReference type="InterPro" id="IPR017871">
    <property type="entry name" value="ABC_transporter-like_CS"/>
</dbReference>
<dbReference type="InterPro" id="IPR050166">
    <property type="entry name" value="ABC_transporter_ATP-bind"/>
</dbReference>
<dbReference type="InterPro" id="IPR027417">
    <property type="entry name" value="P-loop_NTPase"/>
</dbReference>
<dbReference type="PANTHER" id="PTHR42788:SF19">
    <property type="entry name" value="ALIPHATIC SULFONATES IMPORT ATP-BINDING PROTEIN SSUB 2"/>
    <property type="match status" value="1"/>
</dbReference>
<dbReference type="PANTHER" id="PTHR42788">
    <property type="entry name" value="TAURINE IMPORT ATP-BINDING PROTEIN-RELATED"/>
    <property type="match status" value="1"/>
</dbReference>
<dbReference type="Pfam" id="PF00005">
    <property type="entry name" value="ABC_tran"/>
    <property type="match status" value="1"/>
</dbReference>
<dbReference type="SMART" id="SM00382">
    <property type="entry name" value="AAA"/>
    <property type="match status" value="1"/>
</dbReference>
<dbReference type="SUPFAM" id="SSF52540">
    <property type="entry name" value="P-loop containing nucleoside triphosphate hydrolases"/>
    <property type="match status" value="1"/>
</dbReference>
<dbReference type="PROSITE" id="PS00211">
    <property type="entry name" value="ABC_TRANSPORTER_1"/>
    <property type="match status" value="1"/>
</dbReference>
<dbReference type="PROSITE" id="PS50893">
    <property type="entry name" value="ABC_TRANSPORTER_2"/>
    <property type="match status" value="1"/>
</dbReference>
<dbReference type="PROSITE" id="PS51291">
    <property type="entry name" value="SSUB"/>
    <property type="match status" value="1"/>
</dbReference>
<reference key="1">
    <citation type="journal article" date="2006" name="Genome Biol.">
        <title>Genomic analysis reveals that Pseudomonas aeruginosa virulence is combinatorial.</title>
        <authorList>
            <person name="Lee D.G."/>
            <person name="Urbach J.M."/>
            <person name="Wu G."/>
            <person name="Liberati N.T."/>
            <person name="Feinbaum R.L."/>
            <person name="Miyata S."/>
            <person name="Diggins L.T."/>
            <person name="He J."/>
            <person name="Saucier M."/>
            <person name="Deziel E."/>
            <person name="Friedman L."/>
            <person name="Li L."/>
            <person name="Grills G."/>
            <person name="Montgomery K."/>
            <person name="Kucherlapati R."/>
            <person name="Rahme L.G."/>
            <person name="Ausubel F.M."/>
        </authorList>
    </citation>
    <scope>NUCLEOTIDE SEQUENCE [LARGE SCALE GENOMIC DNA]</scope>
    <source>
        <strain>UCBPP-PA14</strain>
    </source>
</reference>
<organism>
    <name type="scientific">Pseudomonas aeruginosa (strain UCBPP-PA14)</name>
    <dbReference type="NCBI Taxonomy" id="208963"/>
    <lineage>
        <taxon>Bacteria</taxon>
        <taxon>Pseudomonadati</taxon>
        <taxon>Pseudomonadota</taxon>
        <taxon>Gammaproteobacteria</taxon>
        <taxon>Pseudomonadales</taxon>
        <taxon>Pseudomonadaceae</taxon>
        <taxon>Pseudomonas</taxon>
    </lineage>
</organism>
<keyword id="KW-0067">ATP-binding</keyword>
<keyword id="KW-0997">Cell inner membrane</keyword>
<keyword id="KW-1003">Cell membrane</keyword>
<keyword id="KW-0472">Membrane</keyword>
<keyword id="KW-0547">Nucleotide-binding</keyword>
<keyword id="KW-1278">Translocase</keyword>
<keyword id="KW-0813">Transport</keyword>
<gene>
    <name evidence="1" type="primary">ssuB1</name>
    <name type="ordered locus">PA14_19520</name>
</gene>
<name>SSUB1_PSEAB</name>
<feature type="chain" id="PRO_0000279929" description="Aliphatic sulfonates import ATP-binding protein SsuB 1">
    <location>
        <begin position="1"/>
        <end position="249"/>
    </location>
</feature>
<feature type="domain" description="ABC transporter" evidence="1">
    <location>
        <begin position="5"/>
        <end position="233"/>
    </location>
</feature>
<feature type="binding site" evidence="1">
    <location>
        <begin position="37"/>
        <end position="44"/>
    </location>
    <ligand>
        <name>ATP</name>
        <dbReference type="ChEBI" id="CHEBI:30616"/>
    </ligand>
</feature>
<sequence>MSGLLDLLEIRKAYGDTRVLEGVALSLAPGEVVSLLGPSGCGKSTLLRIAAGLDDDFQGTVERNPILGFGPDGENGRSGGIGVVFQEPRLLPWLTVAQNVGFADGWLEDEHWVERLLADVGLAGCGGLLPKQLSGGMAQRAAIARGLYGRPQVLLLDEPFSAVDAFTRMRLQDLLQDVVQNYEISVLLVTHDLDEAFYLADRVLLMGGRPGHIRREFHVPLARPRDRRAVELAYLRGEALTEMQRAHVL</sequence>